<feature type="chain" id="PRO_0000395718" description="Probable quinate permease">
    <location>
        <begin position="1"/>
        <end position="545"/>
    </location>
</feature>
<feature type="topological domain" description="Cytoplasmic" evidence="2">
    <location>
        <begin position="1"/>
        <end position="22"/>
    </location>
</feature>
<feature type="transmembrane region" description="Helical" evidence="2">
    <location>
        <begin position="23"/>
        <end position="43"/>
    </location>
</feature>
<feature type="topological domain" description="Extracellular" evidence="2">
    <location>
        <begin position="44"/>
        <end position="66"/>
    </location>
</feature>
<feature type="transmembrane region" description="Helical" evidence="2">
    <location>
        <begin position="67"/>
        <end position="87"/>
    </location>
</feature>
<feature type="topological domain" description="Cytoplasmic" evidence="2">
    <location>
        <begin position="88"/>
        <end position="97"/>
    </location>
</feature>
<feature type="transmembrane region" description="Helical" evidence="2">
    <location>
        <begin position="98"/>
        <end position="118"/>
    </location>
</feature>
<feature type="topological domain" description="Extracellular" evidence="2">
    <location>
        <begin position="119"/>
        <end position="130"/>
    </location>
</feature>
<feature type="transmembrane region" description="Helical" evidence="2">
    <location>
        <begin position="131"/>
        <end position="151"/>
    </location>
</feature>
<feature type="topological domain" description="Cytoplasmic" evidence="2">
    <location>
        <begin position="152"/>
        <end position="159"/>
    </location>
</feature>
<feature type="transmembrane region" description="Helical" evidence="2">
    <location>
        <begin position="160"/>
        <end position="180"/>
    </location>
</feature>
<feature type="topological domain" description="Extracellular" evidence="2">
    <location>
        <begin position="181"/>
        <end position="193"/>
    </location>
</feature>
<feature type="transmembrane region" description="Helical" evidence="2">
    <location>
        <begin position="194"/>
        <end position="214"/>
    </location>
</feature>
<feature type="topological domain" description="Cytoplasmic" evidence="2">
    <location>
        <begin position="215"/>
        <end position="285"/>
    </location>
</feature>
<feature type="transmembrane region" description="Helical" evidence="2">
    <location>
        <begin position="286"/>
        <end position="306"/>
    </location>
</feature>
<feature type="topological domain" description="Extracellular" evidence="2">
    <location>
        <begin position="307"/>
        <end position="325"/>
    </location>
</feature>
<feature type="transmembrane region" description="Helical" evidence="2">
    <location>
        <begin position="326"/>
        <end position="346"/>
    </location>
</feature>
<feature type="topological domain" description="Cytoplasmic" evidence="2">
    <location>
        <begin position="347"/>
        <end position="352"/>
    </location>
</feature>
<feature type="transmembrane region" description="Helical" evidence="2">
    <location>
        <begin position="353"/>
        <end position="373"/>
    </location>
</feature>
<feature type="topological domain" description="Extracellular" evidence="2">
    <location>
        <begin position="374"/>
        <end position="384"/>
    </location>
</feature>
<feature type="transmembrane region" description="Helical" evidence="2">
    <location>
        <begin position="385"/>
        <end position="405"/>
    </location>
</feature>
<feature type="topological domain" description="Cytoplasmic" evidence="2">
    <location>
        <begin position="406"/>
        <end position="457"/>
    </location>
</feature>
<feature type="transmembrane region" description="Helical" evidence="2">
    <location>
        <begin position="458"/>
        <end position="478"/>
    </location>
</feature>
<feature type="topological domain" description="Extracellular" evidence="2">
    <location>
        <begin position="479"/>
        <end position="545"/>
    </location>
</feature>
<feature type="region of interest" description="Disordered" evidence="3">
    <location>
        <begin position="520"/>
        <end position="545"/>
    </location>
</feature>
<evidence type="ECO:0000250" key="1"/>
<evidence type="ECO:0000255" key="2"/>
<evidence type="ECO:0000256" key="3">
    <source>
        <dbReference type="SAM" id="MobiDB-lite"/>
    </source>
</evidence>
<evidence type="ECO:0000305" key="4"/>
<sequence length="545" mass="61067">MSILSLVEDRPTPKEVYNWRIYLLAAVASFTSCMIGYDSAFIGTTISLQSFKDEFNWDAMSTDKQNLISANIVSLYQAGAFFGAFFAYPMGHFWGRRWGLFVAALVFTLGAGLMLGANGDRGLGLIYGGRVLAGLGVGAGSNITPIYISELAPPAIRGRLVGVYELGWQIGGLVGFWICFGVDDTLAPSHKQWIIPFAVQLIPSGLLLLGILFVRESPRWLFLRGRREQAIQNLCWIRQLPVDHIYMIEEIGAIDQSLEQQRSTIGLGFTKPFLAVWSNKRIMYRLFLGSMLFLWQNGSGINAINYYSPTVFKSIGLRGANTSLLTTGIFGVVKTVVTFVWLLWLIDRLGRRLLLMIGAAGGSVCLWIVGAYIKVAKPTERDPDAPLDGGGIAAMFFFYLWTVFYTPSWNGTPWVMNSEMFDPNVRSLAQACAAGSNWLWNFLISRFTPQMFAKMEYGVYFFFASLMILSIVFVFFLIPETKGIPLESMDGLFEYKPIWRAHAKVLAQLREDEERFRTDIEESGYTKSDAQQVERVEQAESVPKA</sequence>
<accession>Q0D135</accession>
<comment type="function">
    <text evidence="1">Integral membrane transporter that imports quinic acid to be catabolized as a carbon source.</text>
</comment>
<comment type="subunit">
    <text evidence="1">Interacts with creB.</text>
</comment>
<comment type="subcellular location">
    <subcellularLocation>
        <location>Cell membrane</location>
        <topology>Multi-pass membrane protein</topology>
    </subcellularLocation>
    <subcellularLocation>
        <location evidence="4">Cell membrane</location>
    </subcellularLocation>
</comment>
<comment type="PTM">
    <text>Ubiquitinated. Deubiquitinated by creB, probably to control its activity or amount.</text>
</comment>
<comment type="similarity">
    <text evidence="4">Belongs to the major facilitator superfamily. Sugar transporter (TC 2.A.1.1) family.</text>
</comment>
<proteinExistence type="inferred from homology"/>
<keyword id="KW-1003">Cell membrane</keyword>
<keyword id="KW-0472">Membrane</keyword>
<keyword id="KW-0672">Quinate metabolism</keyword>
<keyword id="KW-1185">Reference proteome</keyword>
<keyword id="KW-0812">Transmembrane</keyword>
<keyword id="KW-1133">Transmembrane helix</keyword>
<keyword id="KW-0813">Transport</keyword>
<keyword id="KW-0832">Ubl conjugation</keyword>
<name>QUTD_ASPTN</name>
<reference key="1">
    <citation type="submission" date="2005-09" db="EMBL/GenBank/DDBJ databases">
        <title>Annotation of the Aspergillus terreus NIH2624 genome.</title>
        <authorList>
            <person name="Birren B.W."/>
            <person name="Lander E.S."/>
            <person name="Galagan J.E."/>
            <person name="Nusbaum C."/>
            <person name="Devon K."/>
            <person name="Henn M."/>
            <person name="Ma L.-J."/>
            <person name="Jaffe D.B."/>
            <person name="Butler J."/>
            <person name="Alvarez P."/>
            <person name="Gnerre S."/>
            <person name="Grabherr M."/>
            <person name="Kleber M."/>
            <person name="Mauceli E.W."/>
            <person name="Brockman W."/>
            <person name="Rounsley S."/>
            <person name="Young S.K."/>
            <person name="LaButti K."/>
            <person name="Pushparaj V."/>
            <person name="DeCaprio D."/>
            <person name="Crawford M."/>
            <person name="Koehrsen M."/>
            <person name="Engels R."/>
            <person name="Montgomery P."/>
            <person name="Pearson M."/>
            <person name="Howarth C."/>
            <person name="Larson L."/>
            <person name="Luoma S."/>
            <person name="White J."/>
            <person name="Alvarado L."/>
            <person name="Kodira C.D."/>
            <person name="Zeng Q."/>
            <person name="Oleary S."/>
            <person name="Yandava C."/>
            <person name="Denning D.W."/>
            <person name="Nierman W.C."/>
            <person name="Milne T."/>
            <person name="Madden K."/>
        </authorList>
    </citation>
    <scope>NUCLEOTIDE SEQUENCE [LARGE SCALE GENOMIC DNA]</scope>
    <source>
        <strain>NIH 2624 / FGSC A1156</strain>
    </source>
</reference>
<dbReference type="EMBL" id="CH476594">
    <property type="protein sequence ID" value="EAU38995.1"/>
    <property type="molecule type" value="Genomic_DNA"/>
</dbReference>
<dbReference type="RefSeq" id="XP_001210435.1">
    <property type="nucleotide sequence ID" value="XM_001210435.1"/>
</dbReference>
<dbReference type="SMR" id="Q0D135"/>
<dbReference type="STRING" id="341663.Q0D135"/>
<dbReference type="EnsemblFungi" id="EAU38995">
    <property type="protein sequence ID" value="EAU38995"/>
    <property type="gene ID" value="ATEG_00349"/>
</dbReference>
<dbReference type="GeneID" id="4355101"/>
<dbReference type="VEuPathDB" id="FungiDB:ATEG_00349"/>
<dbReference type="eggNOG" id="KOG0254">
    <property type="taxonomic scope" value="Eukaryota"/>
</dbReference>
<dbReference type="HOGENOM" id="CLU_001265_30_12_1"/>
<dbReference type="OMA" id="PADHIYM"/>
<dbReference type="OrthoDB" id="508119at2759"/>
<dbReference type="Proteomes" id="UP000007963">
    <property type="component" value="Unassembled WGS sequence"/>
</dbReference>
<dbReference type="GO" id="GO:0005886">
    <property type="term" value="C:plasma membrane"/>
    <property type="evidence" value="ECO:0007669"/>
    <property type="project" value="UniProtKB-SubCell"/>
</dbReference>
<dbReference type="GO" id="GO:0005351">
    <property type="term" value="F:carbohydrate:proton symporter activity"/>
    <property type="evidence" value="ECO:0007669"/>
    <property type="project" value="TreeGrafter"/>
</dbReference>
<dbReference type="GO" id="GO:0019630">
    <property type="term" value="P:quinate metabolic process"/>
    <property type="evidence" value="ECO:0007669"/>
    <property type="project" value="UniProtKB-KW"/>
</dbReference>
<dbReference type="FunFam" id="1.20.1250.20:FF:000026">
    <property type="entry name" value="MFS quinate transporter QutD"/>
    <property type="match status" value="1"/>
</dbReference>
<dbReference type="Gene3D" id="1.20.1250.20">
    <property type="entry name" value="MFS general substrate transporter like domains"/>
    <property type="match status" value="1"/>
</dbReference>
<dbReference type="InterPro" id="IPR020846">
    <property type="entry name" value="MFS_dom"/>
</dbReference>
<dbReference type="InterPro" id="IPR005828">
    <property type="entry name" value="MFS_sugar_transport-like"/>
</dbReference>
<dbReference type="InterPro" id="IPR050360">
    <property type="entry name" value="MFS_Sugar_Transporters"/>
</dbReference>
<dbReference type="InterPro" id="IPR036259">
    <property type="entry name" value="MFS_trans_sf"/>
</dbReference>
<dbReference type="InterPro" id="IPR003663">
    <property type="entry name" value="Sugar/inositol_transpt"/>
</dbReference>
<dbReference type="InterPro" id="IPR005829">
    <property type="entry name" value="Sugar_transporter_CS"/>
</dbReference>
<dbReference type="NCBIfam" id="TIGR00879">
    <property type="entry name" value="SP"/>
    <property type="match status" value="1"/>
</dbReference>
<dbReference type="PANTHER" id="PTHR48022:SF34">
    <property type="entry name" value="MAJOR FACILITATOR SUPERFAMILY (MFS) PROFILE DOMAIN-CONTAINING PROTEIN-RELATED"/>
    <property type="match status" value="1"/>
</dbReference>
<dbReference type="PANTHER" id="PTHR48022">
    <property type="entry name" value="PLASTIDIC GLUCOSE TRANSPORTER 4"/>
    <property type="match status" value="1"/>
</dbReference>
<dbReference type="Pfam" id="PF00083">
    <property type="entry name" value="Sugar_tr"/>
    <property type="match status" value="1"/>
</dbReference>
<dbReference type="PRINTS" id="PR00171">
    <property type="entry name" value="SUGRTRNSPORT"/>
</dbReference>
<dbReference type="SUPFAM" id="SSF103473">
    <property type="entry name" value="MFS general substrate transporter"/>
    <property type="match status" value="1"/>
</dbReference>
<dbReference type="PROSITE" id="PS50850">
    <property type="entry name" value="MFS"/>
    <property type="match status" value="1"/>
</dbReference>
<dbReference type="PROSITE" id="PS00216">
    <property type="entry name" value="SUGAR_TRANSPORT_1"/>
    <property type="match status" value="1"/>
</dbReference>
<dbReference type="PROSITE" id="PS00217">
    <property type="entry name" value="SUGAR_TRANSPORT_2"/>
    <property type="match status" value="1"/>
</dbReference>
<gene>
    <name type="primary">qutD</name>
    <name type="ORF">ATEG_00349</name>
</gene>
<organism>
    <name type="scientific">Aspergillus terreus (strain NIH 2624 / FGSC A1156)</name>
    <dbReference type="NCBI Taxonomy" id="341663"/>
    <lineage>
        <taxon>Eukaryota</taxon>
        <taxon>Fungi</taxon>
        <taxon>Dikarya</taxon>
        <taxon>Ascomycota</taxon>
        <taxon>Pezizomycotina</taxon>
        <taxon>Eurotiomycetes</taxon>
        <taxon>Eurotiomycetidae</taxon>
        <taxon>Eurotiales</taxon>
        <taxon>Aspergillaceae</taxon>
        <taxon>Aspergillus</taxon>
        <taxon>Aspergillus subgen. Circumdati</taxon>
    </lineage>
</organism>
<protein>
    <recommendedName>
        <fullName>Probable quinate permease</fullName>
    </recommendedName>
    <alternativeName>
        <fullName>Quinate transporter</fullName>
    </alternativeName>
</protein>